<feature type="chain" id="PRO_0000049288" description="Retinal homeobox protein Rx">
    <location>
        <begin position="1"/>
        <end position="873"/>
    </location>
</feature>
<feature type="DNA-binding region" description="Homeobox" evidence="2">
    <location>
        <begin position="528"/>
        <end position="587"/>
    </location>
</feature>
<feature type="region of interest" description="Disordered" evidence="4">
    <location>
        <begin position="127"/>
        <end position="157"/>
    </location>
</feature>
<feature type="region of interest" description="Disordered" evidence="4">
    <location>
        <begin position="183"/>
        <end position="240"/>
    </location>
</feature>
<feature type="region of interest" description="Disordered" evidence="4">
    <location>
        <begin position="278"/>
        <end position="339"/>
    </location>
</feature>
<feature type="region of interest" description="Disordered" evidence="4">
    <location>
        <begin position="374"/>
        <end position="528"/>
    </location>
</feature>
<feature type="region of interest" description="Disordered" evidence="4">
    <location>
        <begin position="662"/>
        <end position="810"/>
    </location>
</feature>
<feature type="region of interest" description="Disordered" evidence="4">
    <location>
        <begin position="822"/>
        <end position="850"/>
    </location>
</feature>
<feature type="short sequence motif" description="Octapeptide motif">
    <location>
        <begin position="116"/>
        <end position="123"/>
    </location>
</feature>
<feature type="short sequence motif" description="OAR" evidence="3">
    <location>
        <begin position="849"/>
        <end position="862"/>
    </location>
</feature>
<feature type="short sequence motif" description="Nuclear localization signal" evidence="1">
    <location>
        <begin position="855"/>
        <end position="859"/>
    </location>
</feature>
<feature type="compositionally biased region" description="Low complexity" evidence="4">
    <location>
        <begin position="127"/>
        <end position="137"/>
    </location>
</feature>
<feature type="compositionally biased region" description="Basic residues" evidence="4">
    <location>
        <begin position="224"/>
        <end position="235"/>
    </location>
</feature>
<feature type="compositionally biased region" description="Low complexity" evidence="4">
    <location>
        <begin position="293"/>
        <end position="316"/>
    </location>
</feature>
<feature type="compositionally biased region" description="Low complexity" evidence="4">
    <location>
        <begin position="438"/>
        <end position="474"/>
    </location>
</feature>
<feature type="compositionally biased region" description="Polar residues" evidence="4">
    <location>
        <begin position="483"/>
        <end position="513"/>
    </location>
</feature>
<feature type="compositionally biased region" description="Pro residues" evidence="4">
    <location>
        <begin position="683"/>
        <end position="694"/>
    </location>
</feature>
<feature type="compositionally biased region" description="Low complexity" evidence="4">
    <location>
        <begin position="702"/>
        <end position="714"/>
    </location>
</feature>
<feature type="compositionally biased region" description="Low complexity" evidence="4">
    <location>
        <begin position="731"/>
        <end position="763"/>
    </location>
</feature>
<feature type="compositionally biased region" description="Polar residues" evidence="4">
    <location>
        <begin position="774"/>
        <end position="785"/>
    </location>
</feature>
<feature type="compositionally biased region" description="Low complexity" evidence="4">
    <location>
        <begin position="835"/>
        <end position="844"/>
    </location>
</feature>
<feature type="sequence conflict" description="In Ref. 1; CAA11241." evidence="5" ref="1">
    <original>S</original>
    <variation>P</variation>
    <location>
        <position position="4"/>
    </location>
</feature>
<feature type="sequence conflict" description="In Ref. 1; CAA11241." evidence="5" ref="1">
    <original>R</original>
    <variation>W</variation>
    <location>
        <position position="136"/>
    </location>
</feature>
<feature type="sequence conflict" description="In Ref. 1; CAA11241." evidence="5" ref="1">
    <original>S</original>
    <variation>T</variation>
    <location>
        <position position="384"/>
    </location>
</feature>
<feature type="sequence conflict" description="In Ref. 1." evidence="5" ref="1">
    <original>PLSLAPGNLTMSSLAAMGHHHAHNGPPP</original>
    <variation>QPGARKSDHEQSGGHGPPPCPQWAAA</variation>
    <location>
        <begin position="645"/>
        <end position="672"/>
    </location>
</feature>
<feature type="sequence conflict" description="In Ref. 1; CAA11241." evidence="5" ref="1">
    <original>G</original>
    <variation>L</variation>
    <location>
        <position position="768"/>
    </location>
</feature>
<organism>
    <name type="scientific">Drosophila melanogaster</name>
    <name type="common">Fruit fly</name>
    <dbReference type="NCBI Taxonomy" id="7227"/>
    <lineage>
        <taxon>Eukaryota</taxon>
        <taxon>Metazoa</taxon>
        <taxon>Ecdysozoa</taxon>
        <taxon>Arthropoda</taxon>
        <taxon>Hexapoda</taxon>
        <taxon>Insecta</taxon>
        <taxon>Pterygota</taxon>
        <taxon>Neoptera</taxon>
        <taxon>Endopterygota</taxon>
        <taxon>Diptera</taxon>
        <taxon>Brachycera</taxon>
        <taxon>Muscomorpha</taxon>
        <taxon>Ephydroidea</taxon>
        <taxon>Drosophilidae</taxon>
        <taxon>Drosophila</taxon>
        <taxon>Sophophora</taxon>
    </lineage>
</organism>
<keyword id="KW-0217">Developmental protein</keyword>
<keyword id="KW-0238">DNA-binding</keyword>
<keyword id="KW-0371">Homeobox</keyword>
<keyword id="KW-0539">Nucleus</keyword>
<keyword id="KW-1185">Reference proteome</keyword>
<keyword id="KW-0804">Transcription</keyword>
<keyword id="KW-0805">Transcription regulation</keyword>
<accession>Q9W2Q1</accession>
<accession>O46035</accession>
<gene>
    <name type="primary">Rx</name>
    <name type="ORF">CG10052</name>
</gene>
<dbReference type="EMBL" id="AJ223300">
    <property type="protein sequence ID" value="CAA11241.1"/>
    <property type="status" value="ALT_INIT"/>
    <property type="molecule type" value="mRNA"/>
</dbReference>
<dbReference type="EMBL" id="AE013599">
    <property type="protein sequence ID" value="AAF46639.3"/>
    <property type="molecule type" value="Genomic_DNA"/>
</dbReference>
<dbReference type="EMBL" id="AY118390">
    <property type="protein sequence ID" value="AAM48419.1"/>
    <property type="molecule type" value="mRNA"/>
</dbReference>
<dbReference type="RefSeq" id="NP_726006.3">
    <property type="nucleotide sequence ID" value="NM_166413.3"/>
</dbReference>
<dbReference type="SMR" id="Q9W2Q1"/>
<dbReference type="BioGRID" id="63010">
    <property type="interactions" value="10"/>
</dbReference>
<dbReference type="IntAct" id="Q9W2Q1">
    <property type="interactions" value="7"/>
</dbReference>
<dbReference type="STRING" id="7227.FBpp0309625"/>
<dbReference type="GlyGen" id="Q9W2Q1">
    <property type="glycosylation" value="3 sites"/>
</dbReference>
<dbReference type="PaxDb" id="7227-FBpp0071447"/>
<dbReference type="DNASU" id="37367"/>
<dbReference type="EnsemblMetazoa" id="FBtr0342783">
    <property type="protein sequence ID" value="FBpp0309625"/>
    <property type="gene ID" value="FBgn0020617"/>
</dbReference>
<dbReference type="GeneID" id="37367"/>
<dbReference type="KEGG" id="dme:Dmel_CG10052"/>
<dbReference type="AGR" id="FB:FBgn0020617"/>
<dbReference type="CTD" id="37367"/>
<dbReference type="FlyBase" id="FBgn0020617">
    <property type="gene designation" value="Rx"/>
</dbReference>
<dbReference type="VEuPathDB" id="VectorBase:FBgn0020617"/>
<dbReference type="eggNOG" id="KOG0490">
    <property type="taxonomic scope" value="Eukaryota"/>
</dbReference>
<dbReference type="HOGENOM" id="CLU_320970_0_0_1"/>
<dbReference type="InParanoid" id="Q9W2Q1"/>
<dbReference type="OrthoDB" id="6159439at2759"/>
<dbReference type="PhylomeDB" id="Q9W2Q1"/>
<dbReference type="BioGRID-ORCS" id="37367">
    <property type="hits" value="0 hits in 3 CRISPR screens"/>
</dbReference>
<dbReference type="ChiTaRS" id="pre-mod(mdg4)-X">
    <property type="organism name" value="fly"/>
</dbReference>
<dbReference type="GenomeRNAi" id="37367"/>
<dbReference type="PRO" id="PR:Q9W2Q1"/>
<dbReference type="Proteomes" id="UP000000803">
    <property type="component" value="Chromosome 2R"/>
</dbReference>
<dbReference type="Bgee" id="FBgn0020617">
    <property type="expression patterns" value="Expressed in embryonic procephalic segment and 26 other cell types or tissues"/>
</dbReference>
<dbReference type="GO" id="GO:0005634">
    <property type="term" value="C:nucleus"/>
    <property type="evidence" value="ECO:0007669"/>
    <property type="project" value="UniProtKB-SubCell"/>
</dbReference>
<dbReference type="GO" id="GO:0000981">
    <property type="term" value="F:DNA-binding transcription factor activity, RNA polymerase II-specific"/>
    <property type="evidence" value="ECO:0000318"/>
    <property type="project" value="GO_Central"/>
</dbReference>
<dbReference type="GO" id="GO:0000977">
    <property type="term" value="F:RNA polymerase II transcription regulatory region sequence-specific DNA binding"/>
    <property type="evidence" value="ECO:0000318"/>
    <property type="project" value="GO_Central"/>
</dbReference>
<dbReference type="GO" id="GO:0045944">
    <property type="term" value="P:positive regulation of transcription by RNA polymerase II"/>
    <property type="evidence" value="ECO:0007669"/>
    <property type="project" value="InterPro"/>
</dbReference>
<dbReference type="GO" id="GO:0006357">
    <property type="term" value="P:regulation of transcription by RNA polymerase II"/>
    <property type="evidence" value="ECO:0000318"/>
    <property type="project" value="GO_Central"/>
</dbReference>
<dbReference type="CDD" id="cd00086">
    <property type="entry name" value="homeodomain"/>
    <property type="match status" value="1"/>
</dbReference>
<dbReference type="FunFam" id="1.10.10.60:FF:000071">
    <property type="entry name" value="Retinal homeobox gene 2"/>
    <property type="match status" value="1"/>
</dbReference>
<dbReference type="Gene3D" id="1.10.10.60">
    <property type="entry name" value="Homeodomain-like"/>
    <property type="match status" value="1"/>
</dbReference>
<dbReference type="InterPro" id="IPR001356">
    <property type="entry name" value="HD"/>
</dbReference>
<dbReference type="InterPro" id="IPR017970">
    <property type="entry name" value="Homeobox_CS"/>
</dbReference>
<dbReference type="InterPro" id="IPR009057">
    <property type="entry name" value="Homeodomain-like_sf"/>
</dbReference>
<dbReference type="InterPro" id="IPR003654">
    <property type="entry name" value="OAR_dom"/>
</dbReference>
<dbReference type="InterPro" id="IPR043562">
    <property type="entry name" value="RAX/RAX2"/>
</dbReference>
<dbReference type="PANTHER" id="PTHR46271">
    <property type="entry name" value="HOMEOBOX PROTEIN, PUTATIVE-RELATED"/>
    <property type="match status" value="1"/>
</dbReference>
<dbReference type="PANTHER" id="PTHR46271:SF4">
    <property type="entry name" value="HOMEOBOX PROTEIN, PUTATIVE-RELATED"/>
    <property type="match status" value="1"/>
</dbReference>
<dbReference type="Pfam" id="PF00046">
    <property type="entry name" value="Homeodomain"/>
    <property type="match status" value="1"/>
</dbReference>
<dbReference type="Pfam" id="PF03826">
    <property type="entry name" value="OAR"/>
    <property type="match status" value="1"/>
</dbReference>
<dbReference type="SMART" id="SM00389">
    <property type="entry name" value="HOX"/>
    <property type="match status" value="1"/>
</dbReference>
<dbReference type="SUPFAM" id="SSF46689">
    <property type="entry name" value="Homeodomain-like"/>
    <property type="match status" value="1"/>
</dbReference>
<dbReference type="PROSITE" id="PS00027">
    <property type="entry name" value="HOMEOBOX_1"/>
    <property type="match status" value="1"/>
</dbReference>
<dbReference type="PROSITE" id="PS50071">
    <property type="entry name" value="HOMEOBOX_2"/>
    <property type="match status" value="1"/>
</dbReference>
<dbReference type="PROSITE" id="PS50803">
    <property type="entry name" value="OAR"/>
    <property type="match status" value="1"/>
</dbReference>
<name>RX_DROME</name>
<protein>
    <recommendedName>
        <fullName>Retinal homeobox protein Rx</fullName>
        <shortName>DRx</shortName>
        <shortName>DRx1</shortName>
    </recommendedName>
</protein>
<comment type="function">
    <text>Appears to function in brain development.</text>
</comment>
<comment type="subcellular location">
    <subcellularLocation>
        <location evidence="2 3">Nucleus</location>
    </subcellularLocation>
</comment>
<comment type="developmental stage">
    <text>Expressed in the procephalic region and in the clypeolabrum from stage 8 on and later in the brain and the central nervous system.</text>
</comment>
<comment type="similarity">
    <text evidence="5">Belongs to the paired homeobox family. Bicoid subfamily.</text>
</comment>
<comment type="sequence caution" evidence="5">
    <conflict type="erroneous initiation">
        <sequence resource="EMBL-CDS" id="CAA11241"/>
    </conflict>
</comment>
<reference key="1">
    <citation type="journal article" date="1998" name="Proc. Natl. Acad. Sci. U.S.A.">
        <title>Isolation of a Drosophila homolog of the vertebrate homeobox gene Rx and its possible role in brain and eye development.</title>
        <authorList>
            <person name="Eggert T."/>
            <person name="Hauck B."/>
            <person name="Hildebrandt N."/>
            <person name="Gehring W.J."/>
            <person name="Walldorf U."/>
        </authorList>
    </citation>
    <scope>NUCLEOTIDE SEQUENCE [MRNA]</scope>
    <source>
        <strain>Canton-S</strain>
        <tissue>Embryo</tissue>
    </source>
</reference>
<reference key="2">
    <citation type="journal article" date="2000" name="Science">
        <title>The genome sequence of Drosophila melanogaster.</title>
        <authorList>
            <person name="Adams M.D."/>
            <person name="Celniker S.E."/>
            <person name="Holt R.A."/>
            <person name="Evans C.A."/>
            <person name="Gocayne J.D."/>
            <person name="Amanatides P.G."/>
            <person name="Scherer S.E."/>
            <person name="Li P.W."/>
            <person name="Hoskins R.A."/>
            <person name="Galle R.F."/>
            <person name="George R.A."/>
            <person name="Lewis S.E."/>
            <person name="Richards S."/>
            <person name="Ashburner M."/>
            <person name="Henderson S.N."/>
            <person name="Sutton G.G."/>
            <person name="Wortman J.R."/>
            <person name="Yandell M.D."/>
            <person name="Zhang Q."/>
            <person name="Chen L.X."/>
            <person name="Brandon R.C."/>
            <person name="Rogers Y.-H.C."/>
            <person name="Blazej R.G."/>
            <person name="Champe M."/>
            <person name="Pfeiffer B.D."/>
            <person name="Wan K.H."/>
            <person name="Doyle C."/>
            <person name="Baxter E.G."/>
            <person name="Helt G."/>
            <person name="Nelson C.R."/>
            <person name="Miklos G.L.G."/>
            <person name="Abril J.F."/>
            <person name="Agbayani A."/>
            <person name="An H.-J."/>
            <person name="Andrews-Pfannkoch C."/>
            <person name="Baldwin D."/>
            <person name="Ballew R.M."/>
            <person name="Basu A."/>
            <person name="Baxendale J."/>
            <person name="Bayraktaroglu L."/>
            <person name="Beasley E.M."/>
            <person name="Beeson K.Y."/>
            <person name="Benos P.V."/>
            <person name="Berman B.P."/>
            <person name="Bhandari D."/>
            <person name="Bolshakov S."/>
            <person name="Borkova D."/>
            <person name="Botchan M.R."/>
            <person name="Bouck J."/>
            <person name="Brokstein P."/>
            <person name="Brottier P."/>
            <person name="Burtis K.C."/>
            <person name="Busam D.A."/>
            <person name="Butler H."/>
            <person name="Cadieu E."/>
            <person name="Center A."/>
            <person name="Chandra I."/>
            <person name="Cherry J.M."/>
            <person name="Cawley S."/>
            <person name="Dahlke C."/>
            <person name="Davenport L.B."/>
            <person name="Davies P."/>
            <person name="de Pablos B."/>
            <person name="Delcher A."/>
            <person name="Deng Z."/>
            <person name="Mays A.D."/>
            <person name="Dew I."/>
            <person name="Dietz S.M."/>
            <person name="Dodson K."/>
            <person name="Doup L.E."/>
            <person name="Downes M."/>
            <person name="Dugan-Rocha S."/>
            <person name="Dunkov B.C."/>
            <person name="Dunn P."/>
            <person name="Durbin K.J."/>
            <person name="Evangelista C.C."/>
            <person name="Ferraz C."/>
            <person name="Ferriera S."/>
            <person name="Fleischmann W."/>
            <person name="Fosler C."/>
            <person name="Gabrielian A.E."/>
            <person name="Garg N.S."/>
            <person name="Gelbart W.M."/>
            <person name="Glasser K."/>
            <person name="Glodek A."/>
            <person name="Gong F."/>
            <person name="Gorrell J.H."/>
            <person name="Gu Z."/>
            <person name="Guan P."/>
            <person name="Harris M."/>
            <person name="Harris N.L."/>
            <person name="Harvey D.A."/>
            <person name="Heiman T.J."/>
            <person name="Hernandez J.R."/>
            <person name="Houck J."/>
            <person name="Hostin D."/>
            <person name="Houston K.A."/>
            <person name="Howland T.J."/>
            <person name="Wei M.-H."/>
            <person name="Ibegwam C."/>
            <person name="Jalali M."/>
            <person name="Kalush F."/>
            <person name="Karpen G.H."/>
            <person name="Ke Z."/>
            <person name="Kennison J.A."/>
            <person name="Ketchum K.A."/>
            <person name="Kimmel B.E."/>
            <person name="Kodira C.D."/>
            <person name="Kraft C.L."/>
            <person name="Kravitz S."/>
            <person name="Kulp D."/>
            <person name="Lai Z."/>
            <person name="Lasko P."/>
            <person name="Lei Y."/>
            <person name="Levitsky A.A."/>
            <person name="Li J.H."/>
            <person name="Li Z."/>
            <person name="Liang Y."/>
            <person name="Lin X."/>
            <person name="Liu X."/>
            <person name="Mattei B."/>
            <person name="McIntosh T.C."/>
            <person name="McLeod M.P."/>
            <person name="McPherson D."/>
            <person name="Merkulov G."/>
            <person name="Milshina N.V."/>
            <person name="Mobarry C."/>
            <person name="Morris J."/>
            <person name="Moshrefi A."/>
            <person name="Mount S.M."/>
            <person name="Moy M."/>
            <person name="Murphy B."/>
            <person name="Murphy L."/>
            <person name="Muzny D.M."/>
            <person name="Nelson D.L."/>
            <person name="Nelson D.R."/>
            <person name="Nelson K.A."/>
            <person name="Nixon K."/>
            <person name="Nusskern D.R."/>
            <person name="Pacleb J.M."/>
            <person name="Palazzolo M."/>
            <person name="Pittman G.S."/>
            <person name="Pan S."/>
            <person name="Pollard J."/>
            <person name="Puri V."/>
            <person name="Reese M.G."/>
            <person name="Reinert K."/>
            <person name="Remington K."/>
            <person name="Saunders R.D.C."/>
            <person name="Scheeler F."/>
            <person name="Shen H."/>
            <person name="Shue B.C."/>
            <person name="Siden-Kiamos I."/>
            <person name="Simpson M."/>
            <person name="Skupski M.P."/>
            <person name="Smith T.J."/>
            <person name="Spier E."/>
            <person name="Spradling A.C."/>
            <person name="Stapleton M."/>
            <person name="Strong R."/>
            <person name="Sun E."/>
            <person name="Svirskas R."/>
            <person name="Tector C."/>
            <person name="Turner R."/>
            <person name="Venter E."/>
            <person name="Wang A.H."/>
            <person name="Wang X."/>
            <person name="Wang Z.-Y."/>
            <person name="Wassarman D.A."/>
            <person name="Weinstock G.M."/>
            <person name="Weissenbach J."/>
            <person name="Williams S.M."/>
            <person name="Woodage T."/>
            <person name="Worley K.C."/>
            <person name="Wu D."/>
            <person name="Yang S."/>
            <person name="Yao Q.A."/>
            <person name="Ye J."/>
            <person name="Yeh R.-F."/>
            <person name="Zaveri J.S."/>
            <person name="Zhan M."/>
            <person name="Zhang G."/>
            <person name="Zhao Q."/>
            <person name="Zheng L."/>
            <person name="Zheng X.H."/>
            <person name="Zhong F.N."/>
            <person name="Zhong W."/>
            <person name="Zhou X."/>
            <person name="Zhu S.C."/>
            <person name="Zhu X."/>
            <person name="Smith H.O."/>
            <person name="Gibbs R.A."/>
            <person name="Myers E.W."/>
            <person name="Rubin G.M."/>
            <person name="Venter J.C."/>
        </authorList>
    </citation>
    <scope>NUCLEOTIDE SEQUENCE [LARGE SCALE GENOMIC DNA]</scope>
    <source>
        <strain>Berkeley</strain>
    </source>
</reference>
<reference key="3">
    <citation type="journal article" date="2002" name="Genome Biol.">
        <title>Annotation of the Drosophila melanogaster euchromatic genome: a systematic review.</title>
        <authorList>
            <person name="Misra S."/>
            <person name="Crosby M.A."/>
            <person name="Mungall C.J."/>
            <person name="Matthews B.B."/>
            <person name="Campbell K.S."/>
            <person name="Hradecky P."/>
            <person name="Huang Y."/>
            <person name="Kaminker J.S."/>
            <person name="Millburn G.H."/>
            <person name="Prochnik S.E."/>
            <person name="Smith C.D."/>
            <person name="Tupy J.L."/>
            <person name="Whitfield E.J."/>
            <person name="Bayraktaroglu L."/>
            <person name="Berman B.P."/>
            <person name="Bettencourt B.R."/>
            <person name="Celniker S.E."/>
            <person name="de Grey A.D.N.J."/>
            <person name="Drysdale R.A."/>
            <person name="Harris N.L."/>
            <person name="Richter J."/>
            <person name="Russo S."/>
            <person name="Schroeder A.J."/>
            <person name="Shu S.Q."/>
            <person name="Stapleton M."/>
            <person name="Yamada C."/>
            <person name="Ashburner M."/>
            <person name="Gelbart W.M."/>
            <person name="Rubin G.M."/>
            <person name="Lewis S.E."/>
        </authorList>
    </citation>
    <scope>GENOME REANNOTATION</scope>
    <source>
        <strain>Berkeley</strain>
    </source>
</reference>
<reference key="4">
    <citation type="journal article" date="2002" name="Genome Biol.">
        <title>A Drosophila full-length cDNA resource.</title>
        <authorList>
            <person name="Stapleton M."/>
            <person name="Carlson J.W."/>
            <person name="Brokstein P."/>
            <person name="Yu C."/>
            <person name="Champe M."/>
            <person name="George R.A."/>
            <person name="Guarin H."/>
            <person name="Kronmiller B."/>
            <person name="Pacleb J.M."/>
            <person name="Park S."/>
            <person name="Wan K.H."/>
            <person name="Rubin G.M."/>
            <person name="Celniker S.E."/>
        </authorList>
    </citation>
    <scope>NUCLEOTIDE SEQUENCE [LARGE SCALE MRNA]</scope>
    <source>
        <strain>Berkeley</strain>
        <tissue>Embryo</tissue>
    </source>
</reference>
<reference key="5">
    <citation type="journal article" date="1997" name="Nature">
        <title>The Rx homeobox gene is essential for vertebrate eye development.</title>
        <authorList>
            <person name="Mathers P.H."/>
            <person name="Grinberg A."/>
            <person name="Mahon K.A."/>
            <person name="Jamrich M."/>
        </authorList>
    </citation>
    <scope>PARTIAL NUCLEOTIDE SEQUENCE</scope>
</reference>
<proteinExistence type="evidence at transcript level"/>
<sequence length="873" mass="92897">MSGSGGVANSSSTAAANNTAATFQHIFEQLVQQGGGNHKLPPKQLEQLRHLLGNVRDAKNLQMIVEKFKNLEQFHEHYAAHLANNNTVISTEDSNDLVKDNARKYGSGGQTLTPRHTIDAILGLKNRNGAANGSGRNPETVSDGSVDPSLGDDDATDLRCGMTLTQLRSMDNHMASMLQQHAKNGGALPYGPPTPPGGQQPQVPNATPLHHGQQMGGQAGHATHAGHGHPTHHGHAPFGYHNAFGFGQGGHGYGHPEEAAGNYLNSMHQMVEANQLQTGANGANPPPAPLPPSSFGSHQQHLAALAAQAQEQQNQHSKYAKSSPTGAGPPPPPGAYFMESQTAPVAPSQINYDERSMSSASDLEEDDDDAAKLQLDVTSPPTPSPRGQLAAKRKSAGVFCDDNEPKLANGQLPGGNYGIRPRSMEEVHHQQQSHHHQQQQQQQQQQQQLQQQQGFQHDFRNSGNGNPNGNSNSGDHGERLNADSDSLVNGSCASSEDLNQTNSSEQGEKITSGSDDEGQDDNCAKKKHRRNRTTFTTYQLHELERAFEKSHYPDVYSREELAMKVNLPEVRVQVWFQNRRAKWRRQEKSESLRLGLTHFTQLPHRLGCGASGLPVDPWLSPPLLSALPGFLSHPQTVYPSYLTPPLSLAPGNLTMSSLAAMGHHHAHNGPPPPHVGHGGHGQPQPPPPPPPHGVPHPHGSHHVVPLSHLSPHLSRMSPHATSLGSPHHGVTPLGTPLHSSLPPSSTATTVAVSSSQSSSSSASLECSGPDVCMSPQNLSIGNADSNGDGRDLSSDLDAGSTSSNPGSSLDKCAASANIELLDVGRDSPPPPPTPTGKGSSTPPTDMRSNSIATLRIKAKEHLDNLNKGMVSIV</sequence>
<evidence type="ECO:0000255" key="1"/>
<evidence type="ECO:0000255" key="2">
    <source>
        <dbReference type="PROSITE-ProRule" id="PRU00108"/>
    </source>
</evidence>
<evidence type="ECO:0000255" key="3">
    <source>
        <dbReference type="PROSITE-ProRule" id="PRU00138"/>
    </source>
</evidence>
<evidence type="ECO:0000256" key="4">
    <source>
        <dbReference type="SAM" id="MobiDB-lite"/>
    </source>
</evidence>
<evidence type="ECO:0000305" key="5"/>